<protein>
    <recommendedName>
        <fullName evidence="1">Chaperonin GroEL</fullName>
        <ecNumber evidence="1">5.6.1.7</ecNumber>
    </recommendedName>
    <alternativeName>
        <fullName evidence="1">60 kDa chaperonin</fullName>
    </alternativeName>
    <alternativeName>
        <fullName>63 kDa stress protein</fullName>
    </alternativeName>
    <alternativeName>
        <fullName evidence="1">Chaperonin-60</fullName>
        <shortName evidence="1">Cpn60</shortName>
    </alternativeName>
    <alternativeName>
        <fullName>GSP63</fullName>
    </alternativeName>
</protein>
<name>CH60_NEIFL</name>
<evidence type="ECO:0000255" key="1">
    <source>
        <dbReference type="HAMAP-Rule" id="MF_00600"/>
    </source>
</evidence>
<sequence length="544" mass="57466">MAAKDVQFGNEVRQKMVNGVNILANAVRVTLGPKGRNVVLDRAFGGPHITKDGVSVAKEIELKDKFENMGAQMVKEVASKTNDVAGDGTTTATVLAQSIVAEGMKYVTAGMNPTDLKRGIDKAVAALVDELKNIAKPCDTSKEIAQVGSISANSDEQVGAIIAEAMEKVGKEGVITVEDGKSLENELDVVEGMQFDRGYLSPYFINDAEKQIAGLDNPFVLLFDKKISNIRDLLPVLEQVAKASRPLLIIAEDVEGEALATLVVNNIRGILKTVAVKAPGFGDRRKAMLQDIAILTGGVVISEEVGLSLEKATLDDLGQAKRIEIGKENTTIIDGFGDAAQIEARVAEIRQQIETATSDYGKEKLQERVAKLAGGVAVIKVGAATEVEMKEKKDRVEDALHATRAAVEEGVVAGGGVALLRARAALENLHTGNADQEAGVQIVLRAVESPLRQIVAKAGGEPSVVVNKVLEGKGNYGYKAGSGEYGDMIEMGVLDPAKVTRSALQHAASIAGLMLTTDCMIAEIPERKPAMPDMGGMGGMGGMM</sequence>
<feature type="chain" id="PRO_0000063456" description="Chaperonin GroEL">
    <location>
        <begin position="1"/>
        <end position="544"/>
    </location>
</feature>
<feature type="binding site" evidence="1">
    <location>
        <begin position="30"/>
        <end position="33"/>
    </location>
    <ligand>
        <name>ATP</name>
        <dbReference type="ChEBI" id="CHEBI:30616"/>
    </ligand>
</feature>
<feature type="binding site" evidence="1">
    <location>
        <position position="51"/>
    </location>
    <ligand>
        <name>ATP</name>
        <dbReference type="ChEBI" id="CHEBI:30616"/>
    </ligand>
</feature>
<feature type="binding site" evidence="1">
    <location>
        <begin position="87"/>
        <end position="91"/>
    </location>
    <ligand>
        <name>ATP</name>
        <dbReference type="ChEBI" id="CHEBI:30616"/>
    </ligand>
</feature>
<feature type="binding site" evidence="1">
    <location>
        <position position="415"/>
    </location>
    <ligand>
        <name>ATP</name>
        <dbReference type="ChEBI" id="CHEBI:30616"/>
    </ligand>
</feature>
<feature type="binding site" evidence="1">
    <location>
        <position position="495"/>
    </location>
    <ligand>
        <name>ATP</name>
        <dbReference type="ChEBI" id="CHEBI:30616"/>
    </ligand>
</feature>
<dbReference type="EC" id="5.6.1.7" evidence="1"/>
<dbReference type="EMBL" id="Z22955">
    <property type="protein sequence ID" value="CAA80531.1"/>
    <property type="molecule type" value="Genomic_DNA"/>
</dbReference>
<dbReference type="PIR" id="S61302">
    <property type="entry name" value="S61302"/>
</dbReference>
<dbReference type="SMR" id="P48215"/>
<dbReference type="STRING" id="484.TW91_0479"/>
<dbReference type="GO" id="GO:0005737">
    <property type="term" value="C:cytoplasm"/>
    <property type="evidence" value="ECO:0007669"/>
    <property type="project" value="UniProtKB-SubCell"/>
</dbReference>
<dbReference type="GO" id="GO:0005524">
    <property type="term" value="F:ATP binding"/>
    <property type="evidence" value="ECO:0007669"/>
    <property type="project" value="UniProtKB-UniRule"/>
</dbReference>
<dbReference type="GO" id="GO:0140662">
    <property type="term" value="F:ATP-dependent protein folding chaperone"/>
    <property type="evidence" value="ECO:0007669"/>
    <property type="project" value="InterPro"/>
</dbReference>
<dbReference type="GO" id="GO:0016853">
    <property type="term" value="F:isomerase activity"/>
    <property type="evidence" value="ECO:0007669"/>
    <property type="project" value="UniProtKB-KW"/>
</dbReference>
<dbReference type="GO" id="GO:0051082">
    <property type="term" value="F:unfolded protein binding"/>
    <property type="evidence" value="ECO:0007669"/>
    <property type="project" value="UniProtKB-UniRule"/>
</dbReference>
<dbReference type="GO" id="GO:0042026">
    <property type="term" value="P:protein refolding"/>
    <property type="evidence" value="ECO:0007669"/>
    <property type="project" value="UniProtKB-UniRule"/>
</dbReference>
<dbReference type="CDD" id="cd03344">
    <property type="entry name" value="GroEL"/>
    <property type="match status" value="1"/>
</dbReference>
<dbReference type="FunFam" id="1.10.560.10:FF:000001">
    <property type="entry name" value="60 kDa chaperonin"/>
    <property type="match status" value="1"/>
</dbReference>
<dbReference type="FunFam" id="3.50.7.10:FF:000001">
    <property type="entry name" value="60 kDa chaperonin"/>
    <property type="match status" value="1"/>
</dbReference>
<dbReference type="Gene3D" id="3.50.7.10">
    <property type="entry name" value="GroEL"/>
    <property type="match status" value="1"/>
</dbReference>
<dbReference type="Gene3D" id="1.10.560.10">
    <property type="entry name" value="GroEL-like equatorial domain"/>
    <property type="match status" value="1"/>
</dbReference>
<dbReference type="Gene3D" id="3.30.260.10">
    <property type="entry name" value="TCP-1-like chaperonin intermediate domain"/>
    <property type="match status" value="1"/>
</dbReference>
<dbReference type="HAMAP" id="MF_00600">
    <property type="entry name" value="CH60"/>
    <property type="match status" value="1"/>
</dbReference>
<dbReference type="InterPro" id="IPR018370">
    <property type="entry name" value="Chaperonin_Cpn60_CS"/>
</dbReference>
<dbReference type="InterPro" id="IPR001844">
    <property type="entry name" value="Cpn60/GroEL"/>
</dbReference>
<dbReference type="InterPro" id="IPR002423">
    <property type="entry name" value="Cpn60/GroEL/TCP-1"/>
</dbReference>
<dbReference type="InterPro" id="IPR027409">
    <property type="entry name" value="GroEL-like_apical_dom_sf"/>
</dbReference>
<dbReference type="InterPro" id="IPR027413">
    <property type="entry name" value="GROEL-like_equatorial_sf"/>
</dbReference>
<dbReference type="InterPro" id="IPR027410">
    <property type="entry name" value="TCP-1-like_intermed_sf"/>
</dbReference>
<dbReference type="NCBIfam" id="TIGR02348">
    <property type="entry name" value="GroEL"/>
    <property type="match status" value="1"/>
</dbReference>
<dbReference type="NCBIfam" id="NF000592">
    <property type="entry name" value="PRK00013.1"/>
    <property type="match status" value="1"/>
</dbReference>
<dbReference type="NCBIfam" id="NF009487">
    <property type="entry name" value="PRK12849.1"/>
    <property type="match status" value="1"/>
</dbReference>
<dbReference type="NCBIfam" id="NF009488">
    <property type="entry name" value="PRK12850.1"/>
    <property type="match status" value="1"/>
</dbReference>
<dbReference type="NCBIfam" id="NF009489">
    <property type="entry name" value="PRK12851.1"/>
    <property type="match status" value="1"/>
</dbReference>
<dbReference type="PANTHER" id="PTHR45633">
    <property type="entry name" value="60 KDA HEAT SHOCK PROTEIN, MITOCHONDRIAL"/>
    <property type="match status" value="1"/>
</dbReference>
<dbReference type="Pfam" id="PF00118">
    <property type="entry name" value="Cpn60_TCP1"/>
    <property type="match status" value="1"/>
</dbReference>
<dbReference type="PRINTS" id="PR00298">
    <property type="entry name" value="CHAPERONIN60"/>
</dbReference>
<dbReference type="SUPFAM" id="SSF52029">
    <property type="entry name" value="GroEL apical domain-like"/>
    <property type="match status" value="1"/>
</dbReference>
<dbReference type="SUPFAM" id="SSF48592">
    <property type="entry name" value="GroEL equatorial domain-like"/>
    <property type="match status" value="1"/>
</dbReference>
<dbReference type="SUPFAM" id="SSF54849">
    <property type="entry name" value="GroEL-intermediate domain like"/>
    <property type="match status" value="1"/>
</dbReference>
<dbReference type="PROSITE" id="PS00296">
    <property type="entry name" value="CHAPERONINS_CPN60"/>
    <property type="match status" value="1"/>
</dbReference>
<gene>
    <name evidence="1" type="primary">groEL</name>
    <name evidence="1" type="synonym">groL</name>
    <name type="synonym">hsp63</name>
    <name type="synonym">mopA</name>
</gene>
<comment type="function">
    <text evidence="1">Together with its co-chaperonin GroES, plays an essential role in assisting protein folding. The GroEL-GroES system forms a nano-cage that allows encapsulation of the non-native substrate proteins and provides a physical environment optimized to promote and accelerate protein folding.</text>
</comment>
<comment type="catalytic activity">
    <reaction evidence="1">
        <text>ATP + H2O + a folded polypeptide = ADP + phosphate + an unfolded polypeptide.</text>
        <dbReference type="EC" id="5.6.1.7"/>
    </reaction>
</comment>
<comment type="subunit">
    <text evidence="1">Forms a cylinder of 14 subunits composed of two heptameric rings stacked back-to-back. Interacts with the co-chaperonin GroES.</text>
</comment>
<comment type="subcellular location">
    <subcellularLocation>
        <location evidence="1">Cytoplasm</location>
    </subcellularLocation>
</comment>
<comment type="similarity">
    <text evidence="1">Belongs to the chaperonin (HSP60) family.</text>
</comment>
<proteinExistence type="inferred from homology"/>
<organism>
    <name type="scientific">Neisseria flavescens</name>
    <dbReference type="NCBI Taxonomy" id="484"/>
    <lineage>
        <taxon>Bacteria</taxon>
        <taxon>Pseudomonadati</taxon>
        <taxon>Pseudomonadota</taxon>
        <taxon>Betaproteobacteria</taxon>
        <taxon>Neisseriales</taxon>
        <taxon>Neisseriaceae</taxon>
        <taxon>Neisseria</taxon>
    </lineage>
</organism>
<reference key="1">
    <citation type="journal article" date="1995" name="Mol. Microbiol.">
        <title>Construction of recombinant neisserial Hsp60 proteins and mapping of antigenic domains.</title>
        <authorList>
            <person name="Pannekoek Y."/>
            <person name="Dankert J."/>
            <person name="van Putten J.P.M."/>
        </authorList>
    </citation>
    <scope>NUCLEOTIDE SEQUENCE [GENOMIC DNA]</scope>
</reference>
<keyword id="KW-0067">ATP-binding</keyword>
<keyword id="KW-0143">Chaperone</keyword>
<keyword id="KW-0963">Cytoplasm</keyword>
<keyword id="KW-0413">Isomerase</keyword>
<keyword id="KW-0547">Nucleotide-binding</keyword>
<accession>P48215</accession>